<gene>
    <name evidence="1" type="primary">dnaJ</name>
    <name type="ordered locus">BCE33L4060</name>
</gene>
<accession>Q634M8</accession>
<feature type="chain" id="PRO_0000070718" description="Chaperone protein DnaJ">
    <location>
        <begin position="1"/>
        <end position="371"/>
    </location>
</feature>
<feature type="domain" description="J" evidence="1">
    <location>
        <begin position="5"/>
        <end position="69"/>
    </location>
</feature>
<feature type="repeat" description="CXXCXGXG motif">
    <location>
        <begin position="146"/>
        <end position="153"/>
    </location>
</feature>
<feature type="repeat" description="CXXCXGXG motif">
    <location>
        <begin position="163"/>
        <end position="170"/>
    </location>
</feature>
<feature type="repeat" description="CXXCXGXG motif">
    <location>
        <begin position="189"/>
        <end position="196"/>
    </location>
</feature>
<feature type="repeat" description="CXXCXGXG motif">
    <location>
        <begin position="203"/>
        <end position="210"/>
    </location>
</feature>
<feature type="zinc finger region" description="CR-type" evidence="1">
    <location>
        <begin position="133"/>
        <end position="215"/>
    </location>
</feature>
<feature type="binding site" evidence="1">
    <location>
        <position position="146"/>
    </location>
    <ligand>
        <name>Zn(2+)</name>
        <dbReference type="ChEBI" id="CHEBI:29105"/>
        <label>1</label>
    </ligand>
</feature>
<feature type="binding site" evidence="1">
    <location>
        <position position="149"/>
    </location>
    <ligand>
        <name>Zn(2+)</name>
        <dbReference type="ChEBI" id="CHEBI:29105"/>
        <label>1</label>
    </ligand>
</feature>
<feature type="binding site" evidence="1">
    <location>
        <position position="163"/>
    </location>
    <ligand>
        <name>Zn(2+)</name>
        <dbReference type="ChEBI" id="CHEBI:29105"/>
        <label>2</label>
    </ligand>
</feature>
<feature type="binding site" evidence="1">
    <location>
        <position position="166"/>
    </location>
    <ligand>
        <name>Zn(2+)</name>
        <dbReference type="ChEBI" id="CHEBI:29105"/>
        <label>2</label>
    </ligand>
</feature>
<feature type="binding site" evidence="1">
    <location>
        <position position="189"/>
    </location>
    <ligand>
        <name>Zn(2+)</name>
        <dbReference type="ChEBI" id="CHEBI:29105"/>
        <label>2</label>
    </ligand>
</feature>
<feature type="binding site" evidence="1">
    <location>
        <position position="192"/>
    </location>
    <ligand>
        <name>Zn(2+)</name>
        <dbReference type="ChEBI" id="CHEBI:29105"/>
        <label>2</label>
    </ligand>
</feature>
<feature type="binding site" evidence="1">
    <location>
        <position position="203"/>
    </location>
    <ligand>
        <name>Zn(2+)</name>
        <dbReference type="ChEBI" id="CHEBI:29105"/>
        <label>1</label>
    </ligand>
</feature>
<feature type="binding site" evidence="1">
    <location>
        <position position="206"/>
    </location>
    <ligand>
        <name>Zn(2+)</name>
        <dbReference type="ChEBI" id="CHEBI:29105"/>
        <label>1</label>
    </ligand>
</feature>
<name>DNAJ_BACCZ</name>
<protein>
    <recommendedName>
        <fullName evidence="1">Chaperone protein DnaJ</fullName>
    </recommendedName>
</protein>
<reference key="1">
    <citation type="journal article" date="2006" name="J. Bacteriol.">
        <title>Pathogenomic sequence analysis of Bacillus cereus and Bacillus thuringiensis isolates closely related to Bacillus anthracis.</title>
        <authorList>
            <person name="Han C.S."/>
            <person name="Xie G."/>
            <person name="Challacombe J.F."/>
            <person name="Altherr M.R."/>
            <person name="Bhotika S.S."/>
            <person name="Bruce D."/>
            <person name="Campbell C.S."/>
            <person name="Campbell M.L."/>
            <person name="Chen J."/>
            <person name="Chertkov O."/>
            <person name="Cleland C."/>
            <person name="Dimitrijevic M."/>
            <person name="Doggett N.A."/>
            <person name="Fawcett J.J."/>
            <person name="Glavina T."/>
            <person name="Goodwin L.A."/>
            <person name="Hill K.K."/>
            <person name="Hitchcock P."/>
            <person name="Jackson P.J."/>
            <person name="Keim P."/>
            <person name="Kewalramani A.R."/>
            <person name="Longmire J."/>
            <person name="Lucas S."/>
            <person name="Malfatti S."/>
            <person name="McMurry K."/>
            <person name="Meincke L.J."/>
            <person name="Misra M."/>
            <person name="Moseman B.L."/>
            <person name="Mundt M."/>
            <person name="Munk A.C."/>
            <person name="Okinaka R.T."/>
            <person name="Parson-Quintana B."/>
            <person name="Reilly L.P."/>
            <person name="Richardson P."/>
            <person name="Robinson D.L."/>
            <person name="Rubin E."/>
            <person name="Saunders E."/>
            <person name="Tapia R."/>
            <person name="Tesmer J.G."/>
            <person name="Thayer N."/>
            <person name="Thompson L.S."/>
            <person name="Tice H."/>
            <person name="Ticknor L.O."/>
            <person name="Wills P.L."/>
            <person name="Brettin T.S."/>
            <person name="Gilna P."/>
        </authorList>
    </citation>
    <scope>NUCLEOTIDE SEQUENCE [LARGE SCALE GENOMIC DNA]</scope>
    <source>
        <strain>ZK / E33L</strain>
    </source>
</reference>
<keyword id="KW-0143">Chaperone</keyword>
<keyword id="KW-0963">Cytoplasm</keyword>
<keyword id="KW-0235">DNA replication</keyword>
<keyword id="KW-0479">Metal-binding</keyword>
<keyword id="KW-0677">Repeat</keyword>
<keyword id="KW-0346">Stress response</keyword>
<keyword id="KW-0862">Zinc</keyword>
<keyword id="KW-0863">Zinc-finger</keyword>
<sequence length="371" mass="40349">MSKRDYYEVLGLSKGASKDEIKKAYRRLAKKYHPDVSKEENAIEKFKEVQEAYEVLSDDQKRAQYDQFGHAGANQGFGGFGGGGDFGGGFGFEDIFSSFFGGGGGRRRDPNAPRQGADLQYQVTLDFEEAIFGKELNVEIPVEDPCDTCKGSGAKPGTSKETCKHCSGSGQVSVEQNTPFGRIVNRQACSHCSGTGQMIKEKCTTCHGSGKVRKRKKINVKIPAGIDNGQQIRVSGKGEAGVNGGPAGDLYVVVHVRSHEFFEREGDHIICEMPLTFAQMALGAEVEVPTVHGKVKLKIPAGTQTGTEFRLKGKGAPNVRGYGQGDQYVVVRVVVPTKLTSHQKDLLREFAGQEEQDDSLFGKLKRAFKGE</sequence>
<proteinExistence type="inferred from homology"/>
<evidence type="ECO:0000255" key="1">
    <source>
        <dbReference type="HAMAP-Rule" id="MF_01152"/>
    </source>
</evidence>
<dbReference type="EMBL" id="CP000001">
    <property type="protein sequence ID" value="AAU16209.1"/>
    <property type="molecule type" value="Genomic_DNA"/>
</dbReference>
<dbReference type="RefSeq" id="WP_000043937.1">
    <property type="nucleotide sequence ID" value="NZ_CP009968.1"/>
</dbReference>
<dbReference type="SMR" id="Q634M8"/>
<dbReference type="KEGG" id="bcz:BCE33L4060"/>
<dbReference type="PATRIC" id="fig|288681.22.peg.1330"/>
<dbReference type="Proteomes" id="UP000002612">
    <property type="component" value="Chromosome"/>
</dbReference>
<dbReference type="GO" id="GO:0005737">
    <property type="term" value="C:cytoplasm"/>
    <property type="evidence" value="ECO:0007669"/>
    <property type="project" value="UniProtKB-SubCell"/>
</dbReference>
<dbReference type="GO" id="GO:0005524">
    <property type="term" value="F:ATP binding"/>
    <property type="evidence" value="ECO:0007669"/>
    <property type="project" value="InterPro"/>
</dbReference>
<dbReference type="GO" id="GO:0031072">
    <property type="term" value="F:heat shock protein binding"/>
    <property type="evidence" value="ECO:0007669"/>
    <property type="project" value="InterPro"/>
</dbReference>
<dbReference type="GO" id="GO:0051082">
    <property type="term" value="F:unfolded protein binding"/>
    <property type="evidence" value="ECO:0007669"/>
    <property type="project" value="UniProtKB-UniRule"/>
</dbReference>
<dbReference type="GO" id="GO:0008270">
    <property type="term" value="F:zinc ion binding"/>
    <property type="evidence" value="ECO:0007669"/>
    <property type="project" value="UniProtKB-UniRule"/>
</dbReference>
<dbReference type="GO" id="GO:0051085">
    <property type="term" value="P:chaperone cofactor-dependent protein refolding"/>
    <property type="evidence" value="ECO:0007669"/>
    <property type="project" value="TreeGrafter"/>
</dbReference>
<dbReference type="GO" id="GO:0006260">
    <property type="term" value="P:DNA replication"/>
    <property type="evidence" value="ECO:0007669"/>
    <property type="project" value="UniProtKB-KW"/>
</dbReference>
<dbReference type="GO" id="GO:0042026">
    <property type="term" value="P:protein refolding"/>
    <property type="evidence" value="ECO:0007669"/>
    <property type="project" value="TreeGrafter"/>
</dbReference>
<dbReference type="GO" id="GO:0009408">
    <property type="term" value="P:response to heat"/>
    <property type="evidence" value="ECO:0007669"/>
    <property type="project" value="InterPro"/>
</dbReference>
<dbReference type="CDD" id="cd06257">
    <property type="entry name" value="DnaJ"/>
    <property type="match status" value="1"/>
</dbReference>
<dbReference type="CDD" id="cd10747">
    <property type="entry name" value="DnaJ_C"/>
    <property type="match status" value="1"/>
</dbReference>
<dbReference type="CDD" id="cd10719">
    <property type="entry name" value="DnaJ_zf"/>
    <property type="match status" value="1"/>
</dbReference>
<dbReference type="FunFam" id="1.10.287.110:FF:000031">
    <property type="entry name" value="Molecular chaperone DnaJ"/>
    <property type="match status" value="1"/>
</dbReference>
<dbReference type="FunFam" id="2.60.260.20:FF:000004">
    <property type="entry name" value="Molecular chaperone DnaJ"/>
    <property type="match status" value="1"/>
</dbReference>
<dbReference type="FunFam" id="2.60.260.20:FF:000009">
    <property type="entry name" value="Putative Mitochondrial DnaJ chaperone"/>
    <property type="match status" value="1"/>
</dbReference>
<dbReference type="Gene3D" id="6.20.20.10">
    <property type="match status" value="2"/>
</dbReference>
<dbReference type="Gene3D" id="1.10.287.110">
    <property type="entry name" value="DnaJ domain"/>
    <property type="match status" value="1"/>
</dbReference>
<dbReference type="Gene3D" id="2.60.260.20">
    <property type="entry name" value="Urease metallochaperone UreE, N-terminal domain"/>
    <property type="match status" value="2"/>
</dbReference>
<dbReference type="HAMAP" id="MF_01152">
    <property type="entry name" value="DnaJ"/>
    <property type="match status" value="1"/>
</dbReference>
<dbReference type="InterPro" id="IPR012724">
    <property type="entry name" value="DnaJ"/>
</dbReference>
<dbReference type="InterPro" id="IPR002939">
    <property type="entry name" value="DnaJ_C"/>
</dbReference>
<dbReference type="InterPro" id="IPR001623">
    <property type="entry name" value="DnaJ_domain"/>
</dbReference>
<dbReference type="InterPro" id="IPR018253">
    <property type="entry name" value="DnaJ_domain_CS"/>
</dbReference>
<dbReference type="InterPro" id="IPR008971">
    <property type="entry name" value="HSP40/DnaJ_pept-bd"/>
</dbReference>
<dbReference type="InterPro" id="IPR001305">
    <property type="entry name" value="HSP_DnaJ_Cys-rich_dom"/>
</dbReference>
<dbReference type="InterPro" id="IPR036410">
    <property type="entry name" value="HSP_DnaJ_Cys-rich_dom_sf"/>
</dbReference>
<dbReference type="InterPro" id="IPR036869">
    <property type="entry name" value="J_dom_sf"/>
</dbReference>
<dbReference type="NCBIfam" id="TIGR02349">
    <property type="entry name" value="DnaJ_bact"/>
    <property type="match status" value="1"/>
</dbReference>
<dbReference type="NCBIfam" id="NF008035">
    <property type="entry name" value="PRK10767.1"/>
    <property type="match status" value="1"/>
</dbReference>
<dbReference type="NCBIfam" id="NF010873">
    <property type="entry name" value="PRK14280.1"/>
    <property type="match status" value="1"/>
</dbReference>
<dbReference type="PANTHER" id="PTHR43096:SF48">
    <property type="entry name" value="CHAPERONE PROTEIN DNAJ"/>
    <property type="match status" value="1"/>
</dbReference>
<dbReference type="PANTHER" id="PTHR43096">
    <property type="entry name" value="DNAJ HOMOLOG 1, MITOCHONDRIAL-RELATED"/>
    <property type="match status" value="1"/>
</dbReference>
<dbReference type="Pfam" id="PF00226">
    <property type="entry name" value="DnaJ"/>
    <property type="match status" value="1"/>
</dbReference>
<dbReference type="Pfam" id="PF01556">
    <property type="entry name" value="DnaJ_C"/>
    <property type="match status" value="1"/>
</dbReference>
<dbReference type="Pfam" id="PF00684">
    <property type="entry name" value="DnaJ_CXXCXGXG"/>
    <property type="match status" value="1"/>
</dbReference>
<dbReference type="PRINTS" id="PR00625">
    <property type="entry name" value="JDOMAIN"/>
</dbReference>
<dbReference type="SMART" id="SM00271">
    <property type="entry name" value="DnaJ"/>
    <property type="match status" value="1"/>
</dbReference>
<dbReference type="SUPFAM" id="SSF46565">
    <property type="entry name" value="Chaperone J-domain"/>
    <property type="match status" value="1"/>
</dbReference>
<dbReference type="SUPFAM" id="SSF57938">
    <property type="entry name" value="DnaJ/Hsp40 cysteine-rich domain"/>
    <property type="match status" value="1"/>
</dbReference>
<dbReference type="SUPFAM" id="SSF49493">
    <property type="entry name" value="HSP40/DnaJ peptide-binding domain"/>
    <property type="match status" value="2"/>
</dbReference>
<dbReference type="PROSITE" id="PS00636">
    <property type="entry name" value="DNAJ_1"/>
    <property type="match status" value="1"/>
</dbReference>
<dbReference type="PROSITE" id="PS50076">
    <property type="entry name" value="DNAJ_2"/>
    <property type="match status" value="1"/>
</dbReference>
<dbReference type="PROSITE" id="PS51188">
    <property type="entry name" value="ZF_CR"/>
    <property type="match status" value="1"/>
</dbReference>
<comment type="function">
    <text evidence="1">Participates actively in the response to hyperosmotic and heat shock by preventing the aggregation of stress-denatured proteins and by disaggregating proteins, also in an autonomous, DnaK-independent fashion. Unfolded proteins bind initially to DnaJ; upon interaction with the DnaJ-bound protein, DnaK hydrolyzes its bound ATP, resulting in the formation of a stable complex. GrpE releases ADP from DnaK; ATP binding to DnaK triggers the release of the substrate protein, thus completing the reaction cycle. Several rounds of ATP-dependent interactions between DnaJ, DnaK and GrpE are required for fully efficient folding. Also involved, together with DnaK and GrpE, in the DNA replication of plasmids through activation of initiation proteins.</text>
</comment>
<comment type="cofactor">
    <cofactor evidence="1">
        <name>Zn(2+)</name>
        <dbReference type="ChEBI" id="CHEBI:29105"/>
    </cofactor>
    <text evidence="1">Binds 2 Zn(2+) ions per monomer.</text>
</comment>
<comment type="subunit">
    <text evidence="1">Homodimer.</text>
</comment>
<comment type="subcellular location">
    <subcellularLocation>
        <location evidence="1">Cytoplasm</location>
    </subcellularLocation>
</comment>
<comment type="domain">
    <text evidence="1">The J domain is necessary and sufficient to stimulate DnaK ATPase activity. Zinc center 1 plays an important role in the autonomous, DnaK-independent chaperone activity of DnaJ. Zinc center 2 is essential for interaction with DnaK and for DnaJ activity.</text>
</comment>
<comment type="similarity">
    <text evidence="1">Belongs to the DnaJ family.</text>
</comment>
<organism>
    <name type="scientific">Bacillus cereus (strain ZK / E33L)</name>
    <dbReference type="NCBI Taxonomy" id="288681"/>
    <lineage>
        <taxon>Bacteria</taxon>
        <taxon>Bacillati</taxon>
        <taxon>Bacillota</taxon>
        <taxon>Bacilli</taxon>
        <taxon>Bacillales</taxon>
        <taxon>Bacillaceae</taxon>
        <taxon>Bacillus</taxon>
        <taxon>Bacillus cereus group</taxon>
    </lineage>
</organism>